<dbReference type="EC" id="5.1.3.9" evidence="1"/>
<dbReference type="EMBL" id="AE005174">
    <property type="protein sequence ID" value="AAG58351.1"/>
    <property type="molecule type" value="Genomic_DNA"/>
</dbReference>
<dbReference type="EMBL" id="BA000007">
    <property type="protein sequence ID" value="BAB37519.1"/>
    <property type="molecule type" value="Genomic_DNA"/>
</dbReference>
<dbReference type="PIR" id="C85986">
    <property type="entry name" value="C85986"/>
</dbReference>
<dbReference type="PIR" id="H91140">
    <property type="entry name" value="H91140"/>
</dbReference>
<dbReference type="RefSeq" id="NP_312123.1">
    <property type="nucleotide sequence ID" value="NC_002695.1"/>
</dbReference>
<dbReference type="RefSeq" id="WP_001301938.1">
    <property type="nucleotide sequence ID" value="NZ_VOAI01000014.1"/>
</dbReference>
<dbReference type="SMR" id="Q8X9G9"/>
<dbReference type="STRING" id="155864.Z4581"/>
<dbReference type="GeneID" id="916055"/>
<dbReference type="KEGG" id="ece:Z4581"/>
<dbReference type="KEGG" id="ecs:ECs_4096"/>
<dbReference type="PATRIC" id="fig|386585.9.peg.4276"/>
<dbReference type="eggNOG" id="COG3010">
    <property type="taxonomic scope" value="Bacteria"/>
</dbReference>
<dbReference type="HOGENOM" id="CLU_086300_0_0_6"/>
<dbReference type="OMA" id="TRPMEIT"/>
<dbReference type="UniPathway" id="UPA00629">
    <property type="reaction ID" value="UER00682"/>
</dbReference>
<dbReference type="Proteomes" id="UP000000558">
    <property type="component" value="Chromosome"/>
</dbReference>
<dbReference type="Proteomes" id="UP000002519">
    <property type="component" value="Chromosome"/>
</dbReference>
<dbReference type="GO" id="GO:0005829">
    <property type="term" value="C:cytosol"/>
    <property type="evidence" value="ECO:0007669"/>
    <property type="project" value="TreeGrafter"/>
</dbReference>
<dbReference type="GO" id="GO:0047465">
    <property type="term" value="F:N-acylglucosamine-6-phosphate 2-epimerase activity"/>
    <property type="evidence" value="ECO:0007669"/>
    <property type="project" value="UniProtKB-EC"/>
</dbReference>
<dbReference type="GO" id="GO:0005975">
    <property type="term" value="P:carbohydrate metabolic process"/>
    <property type="evidence" value="ECO:0007669"/>
    <property type="project" value="UniProtKB-UniRule"/>
</dbReference>
<dbReference type="GO" id="GO:0006053">
    <property type="term" value="P:N-acetylmannosamine catabolic process"/>
    <property type="evidence" value="ECO:0007669"/>
    <property type="project" value="TreeGrafter"/>
</dbReference>
<dbReference type="GO" id="GO:0019262">
    <property type="term" value="P:N-acetylneuraminate catabolic process"/>
    <property type="evidence" value="ECO:0007669"/>
    <property type="project" value="UniProtKB-UniRule"/>
</dbReference>
<dbReference type="CDD" id="cd04729">
    <property type="entry name" value="NanE"/>
    <property type="match status" value="1"/>
</dbReference>
<dbReference type="FunFam" id="3.20.20.70:FF:000035">
    <property type="entry name" value="Putative N-acetylmannosamine-6-phosphate 2-epimerase"/>
    <property type="match status" value="1"/>
</dbReference>
<dbReference type="Gene3D" id="3.20.20.70">
    <property type="entry name" value="Aldolase class I"/>
    <property type="match status" value="1"/>
</dbReference>
<dbReference type="HAMAP" id="MF_01235">
    <property type="entry name" value="ManNAc6P_epimer"/>
    <property type="match status" value="1"/>
</dbReference>
<dbReference type="InterPro" id="IPR013785">
    <property type="entry name" value="Aldolase_TIM"/>
</dbReference>
<dbReference type="InterPro" id="IPR007260">
    <property type="entry name" value="NanE"/>
</dbReference>
<dbReference type="InterPro" id="IPR011060">
    <property type="entry name" value="RibuloseP-bd_barrel"/>
</dbReference>
<dbReference type="NCBIfam" id="NF002231">
    <property type="entry name" value="PRK01130.1"/>
    <property type="match status" value="1"/>
</dbReference>
<dbReference type="PANTHER" id="PTHR36204">
    <property type="entry name" value="N-ACETYLMANNOSAMINE-6-PHOSPHATE 2-EPIMERASE-RELATED"/>
    <property type="match status" value="1"/>
</dbReference>
<dbReference type="PANTHER" id="PTHR36204:SF1">
    <property type="entry name" value="N-ACETYLMANNOSAMINE-6-PHOSPHATE 2-EPIMERASE-RELATED"/>
    <property type="match status" value="1"/>
</dbReference>
<dbReference type="Pfam" id="PF04131">
    <property type="entry name" value="NanE"/>
    <property type="match status" value="1"/>
</dbReference>
<dbReference type="SUPFAM" id="SSF51366">
    <property type="entry name" value="Ribulose-phoshate binding barrel"/>
    <property type="match status" value="1"/>
</dbReference>
<name>NANE_ECO57</name>
<reference key="1">
    <citation type="journal article" date="2001" name="Nature">
        <title>Genome sequence of enterohaemorrhagic Escherichia coli O157:H7.</title>
        <authorList>
            <person name="Perna N.T."/>
            <person name="Plunkett G. III"/>
            <person name="Burland V."/>
            <person name="Mau B."/>
            <person name="Glasner J.D."/>
            <person name="Rose D.J."/>
            <person name="Mayhew G.F."/>
            <person name="Evans P.S."/>
            <person name="Gregor J."/>
            <person name="Kirkpatrick H.A."/>
            <person name="Posfai G."/>
            <person name="Hackett J."/>
            <person name="Klink S."/>
            <person name="Boutin A."/>
            <person name="Shao Y."/>
            <person name="Miller L."/>
            <person name="Grotbeck E.J."/>
            <person name="Davis N.W."/>
            <person name="Lim A."/>
            <person name="Dimalanta E.T."/>
            <person name="Potamousis K."/>
            <person name="Apodaca J."/>
            <person name="Anantharaman T.S."/>
            <person name="Lin J."/>
            <person name="Yen G."/>
            <person name="Schwartz D.C."/>
            <person name="Welch R.A."/>
            <person name="Blattner F.R."/>
        </authorList>
    </citation>
    <scope>NUCLEOTIDE SEQUENCE [LARGE SCALE GENOMIC DNA]</scope>
    <source>
        <strain>O157:H7 / EDL933 / ATCC 700927 / EHEC</strain>
    </source>
</reference>
<reference key="2">
    <citation type="journal article" date="2001" name="DNA Res.">
        <title>Complete genome sequence of enterohemorrhagic Escherichia coli O157:H7 and genomic comparison with a laboratory strain K-12.</title>
        <authorList>
            <person name="Hayashi T."/>
            <person name="Makino K."/>
            <person name="Ohnishi M."/>
            <person name="Kurokawa K."/>
            <person name="Ishii K."/>
            <person name="Yokoyama K."/>
            <person name="Han C.-G."/>
            <person name="Ohtsubo E."/>
            <person name="Nakayama K."/>
            <person name="Murata T."/>
            <person name="Tanaka M."/>
            <person name="Tobe T."/>
            <person name="Iida T."/>
            <person name="Takami H."/>
            <person name="Honda T."/>
            <person name="Sasakawa C."/>
            <person name="Ogasawara N."/>
            <person name="Yasunaga T."/>
            <person name="Kuhara S."/>
            <person name="Shiba T."/>
            <person name="Hattori M."/>
            <person name="Shinagawa H."/>
        </authorList>
    </citation>
    <scope>NUCLEOTIDE SEQUENCE [LARGE SCALE GENOMIC DNA]</scope>
    <source>
        <strain>O157:H7 / Sakai / RIMD 0509952 / EHEC</strain>
    </source>
</reference>
<proteinExistence type="inferred from homology"/>
<protein>
    <recommendedName>
        <fullName evidence="1">Putative N-acetylmannosamine-6-phosphate 2-epimerase</fullName>
        <ecNumber evidence="1">5.1.3.9</ecNumber>
    </recommendedName>
    <alternativeName>
        <fullName evidence="1">ManNAc-6-P epimerase</fullName>
    </alternativeName>
</protein>
<accession>Q8X9G9</accession>
<gene>
    <name evidence="1" type="primary">nanE</name>
    <name type="ordered locus">Z4581</name>
    <name type="ordered locus">ECs4096</name>
</gene>
<sequence length="229" mass="24159">MSLLAQLDQKIAANGGLIVSCQPVPDSPLDKPEIVAAMALAAEQAGAVAIRIEGVANLQATRAVVSVPIIGIVKRDLEDSPVRITAYIEDVDALAQAGADIIAIDGTDRPRPVPVETLLARIHHHGLLAMTDCSTPEDGLACQKLGAEIIGTTLSGYTTPETPEEPDLTLVKRLSDAGCRVIAEGRYNTPAQAADAMRHGAWAVTVGSAITRLEHICQWYNTAMKKAVL</sequence>
<evidence type="ECO:0000255" key="1">
    <source>
        <dbReference type="HAMAP-Rule" id="MF_01235"/>
    </source>
</evidence>
<organism>
    <name type="scientific">Escherichia coli O157:H7</name>
    <dbReference type="NCBI Taxonomy" id="83334"/>
    <lineage>
        <taxon>Bacteria</taxon>
        <taxon>Pseudomonadati</taxon>
        <taxon>Pseudomonadota</taxon>
        <taxon>Gammaproteobacteria</taxon>
        <taxon>Enterobacterales</taxon>
        <taxon>Enterobacteriaceae</taxon>
        <taxon>Escherichia</taxon>
    </lineage>
</organism>
<comment type="function">
    <text evidence="1">Converts N-acetylmannosamine-6-phosphate (ManNAc-6-P) to N-acetylglucosamine-6-phosphate (GlcNAc-6-P).</text>
</comment>
<comment type="catalytic activity">
    <reaction evidence="1">
        <text>an N-acyl-D-glucosamine 6-phosphate = an N-acyl-D-mannosamine 6-phosphate</text>
        <dbReference type="Rhea" id="RHEA:23932"/>
        <dbReference type="ChEBI" id="CHEBI:57599"/>
        <dbReference type="ChEBI" id="CHEBI:57666"/>
        <dbReference type="EC" id="5.1.3.9"/>
    </reaction>
</comment>
<comment type="pathway">
    <text evidence="1">Amino-sugar metabolism; N-acetylneuraminate degradation; D-fructose 6-phosphate from N-acetylneuraminate: step 3/5.</text>
</comment>
<comment type="similarity">
    <text evidence="1">Belongs to the NanE family.</text>
</comment>
<feature type="chain" id="PRO_0000179771" description="Putative N-acetylmannosamine-6-phosphate 2-epimerase">
    <location>
        <begin position="1"/>
        <end position="229"/>
    </location>
</feature>
<keyword id="KW-0119">Carbohydrate metabolism</keyword>
<keyword id="KW-0413">Isomerase</keyword>
<keyword id="KW-1185">Reference proteome</keyword>